<evidence type="ECO:0000250" key="1"/>
<evidence type="ECO:0000255" key="2">
    <source>
        <dbReference type="PROSITE-ProRule" id="PRU00169"/>
    </source>
</evidence>
<evidence type="ECO:0000255" key="3">
    <source>
        <dbReference type="PROSITE-ProRule" id="PRU01091"/>
    </source>
</evidence>
<organism>
    <name type="scientific">Staphylococcus aureus (strain MSSA476)</name>
    <dbReference type="NCBI Taxonomy" id="282459"/>
    <lineage>
        <taxon>Bacteria</taxon>
        <taxon>Bacillati</taxon>
        <taxon>Bacillota</taxon>
        <taxon>Bacilli</taxon>
        <taxon>Bacillales</taxon>
        <taxon>Staphylococcaceae</taxon>
        <taxon>Staphylococcus</taxon>
    </lineage>
</organism>
<dbReference type="EMBL" id="BX571857">
    <property type="protein sequence ID" value="CAG42447.1"/>
    <property type="molecule type" value="Genomic_DNA"/>
</dbReference>
<dbReference type="RefSeq" id="WP_000149344.1">
    <property type="nucleotide sequence ID" value="NC_002953.3"/>
</dbReference>
<dbReference type="SMR" id="Q6GBC4"/>
<dbReference type="KEGG" id="sas:SAS0671"/>
<dbReference type="HOGENOM" id="CLU_000445_30_4_9"/>
<dbReference type="GO" id="GO:0005829">
    <property type="term" value="C:cytosol"/>
    <property type="evidence" value="ECO:0007669"/>
    <property type="project" value="TreeGrafter"/>
</dbReference>
<dbReference type="GO" id="GO:0032993">
    <property type="term" value="C:protein-DNA complex"/>
    <property type="evidence" value="ECO:0007669"/>
    <property type="project" value="TreeGrafter"/>
</dbReference>
<dbReference type="GO" id="GO:0000156">
    <property type="term" value="F:phosphorelay response regulator activity"/>
    <property type="evidence" value="ECO:0007669"/>
    <property type="project" value="TreeGrafter"/>
</dbReference>
<dbReference type="GO" id="GO:0000976">
    <property type="term" value="F:transcription cis-regulatory region binding"/>
    <property type="evidence" value="ECO:0007669"/>
    <property type="project" value="TreeGrafter"/>
</dbReference>
<dbReference type="GO" id="GO:0006355">
    <property type="term" value="P:regulation of DNA-templated transcription"/>
    <property type="evidence" value="ECO:0007669"/>
    <property type="project" value="InterPro"/>
</dbReference>
<dbReference type="CDD" id="cd17574">
    <property type="entry name" value="REC_OmpR"/>
    <property type="match status" value="1"/>
</dbReference>
<dbReference type="CDD" id="cd00383">
    <property type="entry name" value="trans_reg_C"/>
    <property type="match status" value="1"/>
</dbReference>
<dbReference type="FunFam" id="1.10.10.10:FF:000018">
    <property type="entry name" value="DNA-binding response regulator ResD"/>
    <property type="match status" value="1"/>
</dbReference>
<dbReference type="Gene3D" id="3.40.50.2300">
    <property type="match status" value="1"/>
</dbReference>
<dbReference type="Gene3D" id="6.10.250.690">
    <property type="match status" value="1"/>
</dbReference>
<dbReference type="Gene3D" id="1.10.10.10">
    <property type="entry name" value="Winged helix-like DNA-binding domain superfamily/Winged helix DNA-binding domain"/>
    <property type="match status" value="1"/>
</dbReference>
<dbReference type="InterPro" id="IPR011006">
    <property type="entry name" value="CheY-like_superfamily"/>
</dbReference>
<dbReference type="InterPro" id="IPR001867">
    <property type="entry name" value="OmpR/PhoB-type_DNA-bd"/>
</dbReference>
<dbReference type="InterPro" id="IPR001789">
    <property type="entry name" value="Sig_transdc_resp-reg_receiver"/>
</dbReference>
<dbReference type="InterPro" id="IPR039420">
    <property type="entry name" value="WalR-like"/>
</dbReference>
<dbReference type="InterPro" id="IPR036388">
    <property type="entry name" value="WH-like_DNA-bd_sf"/>
</dbReference>
<dbReference type="PANTHER" id="PTHR48111">
    <property type="entry name" value="REGULATOR OF RPOS"/>
    <property type="match status" value="1"/>
</dbReference>
<dbReference type="PANTHER" id="PTHR48111:SF2">
    <property type="entry name" value="RESPONSE REGULATOR SAER"/>
    <property type="match status" value="1"/>
</dbReference>
<dbReference type="Pfam" id="PF00072">
    <property type="entry name" value="Response_reg"/>
    <property type="match status" value="1"/>
</dbReference>
<dbReference type="Pfam" id="PF00486">
    <property type="entry name" value="Trans_reg_C"/>
    <property type="match status" value="1"/>
</dbReference>
<dbReference type="SMART" id="SM00448">
    <property type="entry name" value="REC"/>
    <property type="match status" value="1"/>
</dbReference>
<dbReference type="SMART" id="SM00862">
    <property type="entry name" value="Trans_reg_C"/>
    <property type="match status" value="1"/>
</dbReference>
<dbReference type="SUPFAM" id="SSF52172">
    <property type="entry name" value="CheY-like"/>
    <property type="match status" value="1"/>
</dbReference>
<dbReference type="PROSITE" id="PS51755">
    <property type="entry name" value="OMPR_PHOB"/>
    <property type="match status" value="1"/>
</dbReference>
<dbReference type="PROSITE" id="PS50110">
    <property type="entry name" value="RESPONSE_REGULATORY"/>
    <property type="match status" value="1"/>
</dbReference>
<proteinExistence type="inferred from homology"/>
<reference key="1">
    <citation type="journal article" date="2004" name="Proc. Natl. Acad. Sci. U.S.A.">
        <title>Complete genomes of two clinical Staphylococcus aureus strains: evidence for the rapid evolution of virulence and drug resistance.</title>
        <authorList>
            <person name="Holden M.T.G."/>
            <person name="Feil E.J."/>
            <person name="Lindsay J.A."/>
            <person name="Peacock S.J."/>
            <person name="Day N.P.J."/>
            <person name="Enright M.C."/>
            <person name="Foster T.J."/>
            <person name="Moore C.E."/>
            <person name="Hurst L."/>
            <person name="Atkin R."/>
            <person name="Barron A."/>
            <person name="Bason N."/>
            <person name="Bentley S.D."/>
            <person name="Chillingworth C."/>
            <person name="Chillingworth T."/>
            <person name="Churcher C."/>
            <person name="Clark L."/>
            <person name="Corton C."/>
            <person name="Cronin A."/>
            <person name="Doggett J."/>
            <person name="Dowd L."/>
            <person name="Feltwell T."/>
            <person name="Hance Z."/>
            <person name="Harris B."/>
            <person name="Hauser H."/>
            <person name="Holroyd S."/>
            <person name="Jagels K."/>
            <person name="James K.D."/>
            <person name="Lennard N."/>
            <person name="Line A."/>
            <person name="Mayes R."/>
            <person name="Moule S."/>
            <person name="Mungall K."/>
            <person name="Ormond D."/>
            <person name="Quail M.A."/>
            <person name="Rabbinowitsch E."/>
            <person name="Rutherford K.M."/>
            <person name="Sanders M."/>
            <person name="Sharp S."/>
            <person name="Simmonds M."/>
            <person name="Stevens K."/>
            <person name="Whitehead S."/>
            <person name="Barrell B.G."/>
            <person name="Spratt B.G."/>
            <person name="Parkhill J."/>
        </authorList>
    </citation>
    <scope>NUCLEOTIDE SEQUENCE [LARGE SCALE GENOMIC DNA]</scope>
    <source>
        <strain>MSSA476</strain>
    </source>
</reference>
<comment type="function">
    <text evidence="1">Member of the two-component regulatory system SaeR/SaeS involved in the regulation of staphylococcal virulence factors in a strain-dependent fashion. Probably functions as a transcriptional regulator via a specific DNA-binding domain, recognizing motifs near the promoter sequences of target genes (By similarity).</text>
</comment>
<comment type="subcellular location">
    <subcellularLocation>
        <location evidence="1">Cytoplasm</location>
    </subcellularLocation>
</comment>
<comment type="PTM">
    <text evidence="1">Phosphorylated by SaeS.</text>
</comment>
<feature type="chain" id="PRO_0000295921" description="Response regulator SaeR">
    <location>
        <begin position="1"/>
        <end position="228"/>
    </location>
</feature>
<feature type="domain" description="Response regulatory" evidence="2">
    <location>
        <begin position="3"/>
        <end position="116"/>
    </location>
</feature>
<feature type="DNA-binding region" description="OmpR/PhoB-type" evidence="3">
    <location>
        <begin position="127"/>
        <end position="226"/>
    </location>
</feature>
<feature type="modified residue" description="4-aspartylphosphate" evidence="2">
    <location>
        <position position="51"/>
    </location>
</feature>
<keyword id="KW-0963">Cytoplasm</keyword>
<keyword id="KW-0238">DNA-binding</keyword>
<keyword id="KW-0597">Phosphoprotein</keyword>
<keyword id="KW-0716">Sensory transduction</keyword>
<keyword id="KW-0804">Transcription</keyword>
<keyword id="KW-0805">Transcription regulation</keyword>
<keyword id="KW-0902">Two-component regulatory system</keyword>
<keyword id="KW-0843">Virulence</keyword>
<accession>Q6GBC4</accession>
<sequence length="228" mass="26858">MTHLLIVDDEQDIVDICQTYFEYEGYKVTTTTSGKEAISLLSNDIDIMVLDIMMPEVNGYDIVKEMKRQKLDIPFIYLTAKTQEHDTIYALTLGADDYVKKPFSPRELVLRINNLLTRMKKYHHQPVEQLSFDELTLINLSKVVTVNGHEVPMRIKEFELLWYLASRENEVISKSELLEKVWGYDYYEDANTVNVHIHRIREKLEKESFTTYTITTVWGLGYKFERSR</sequence>
<protein>
    <recommendedName>
        <fullName>Response regulator SaeR</fullName>
    </recommendedName>
    <alternativeName>
        <fullName>Staphylococcus exoprotein expression protein R</fullName>
    </alternativeName>
</protein>
<gene>
    <name type="primary">saeR</name>
    <name type="ordered locus">SAS0671</name>
</gene>
<name>SAER_STAAS</name>